<dbReference type="EMBL" id="CP000469">
    <property type="protein sequence ID" value="ABK47979.1"/>
    <property type="molecule type" value="Genomic_DNA"/>
</dbReference>
<dbReference type="RefSeq" id="WP_011716765.1">
    <property type="nucleotide sequence ID" value="NC_008577.1"/>
</dbReference>
<dbReference type="SMR" id="A0KW10"/>
<dbReference type="STRING" id="94122.Shewana3_1746"/>
<dbReference type="GeneID" id="94727737"/>
<dbReference type="KEGG" id="shn:Shewana3_1746"/>
<dbReference type="eggNOG" id="COG2915">
    <property type="taxonomic scope" value="Bacteria"/>
</dbReference>
<dbReference type="HOGENOM" id="CLU_098920_0_0_6"/>
<dbReference type="OrthoDB" id="9788031at2"/>
<dbReference type="Proteomes" id="UP000002589">
    <property type="component" value="Chromosome"/>
</dbReference>
<dbReference type="GO" id="GO:0005737">
    <property type="term" value="C:cytoplasm"/>
    <property type="evidence" value="ECO:0007669"/>
    <property type="project" value="UniProtKB-SubCell"/>
</dbReference>
<dbReference type="GO" id="GO:0005886">
    <property type="term" value="C:plasma membrane"/>
    <property type="evidence" value="ECO:0007669"/>
    <property type="project" value="UniProtKB-SubCell"/>
</dbReference>
<dbReference type="FunFam" id="1.10.3890.10:FF:000002">
    <property type="entry name" value="High frequency lysogenization protein HflD homolog"/>
    <property type="match status" value="1"/>
</dbReference>
<dbReference type="Gene3D" id="1.10.3890.10">
    <property type="entry name" value="HflD-like"/>
    <property type="match status" value="1"/>
</dbReference>
<dbReference type="HAMAP" id="MF_00695">
    <property type="entry name" value="HflD_protein"/>
    <property type="match status" value="1"/>
</dbReference>
<dbReference type="InterPro" id="IPR007451">
    <property type="entry name" value="HflD"/>
</dbReference>
<dbReference type="InterPro" id="IPR035932">
    <property type="entry name" value="HflD-like_sf"/>
</dbReference>
<dbReference type="NCBIfam" id="NF001246">
    <property type="entry name" value="PRK00218.1-2"/>
    <property type="match status" value="1"/>
</dbReference>
<dbReference type="NCBIfam" id="NF001248">
    <property type="entry name" value="PRK00218.1-4"/>
    <property type="match status" value="1"/>
</dbReference>
<dbReference type="PANTHER" id="PTHR38100">
    <property type="entry name" value="HIGH FREQUENCY LYSOGENIZATION PROTEIN HFLD"/>
    <property type="match status" value="1"/>
</dbReference>
<dbReference type="PANTHER" id="PTHR38100:SF1">
    <property type="entry name" value="HIGH FREQUENCY LYSOGENIZATION PROTEIN HFLD"/>
    <property type="match status" value="1"/>
</dbReference>
<dbReference type="Pfam" id="PF04356">
    <property type="entry name" value="DUF489"/>
    <property type="match status" value="1"/>
</dbReference>
<dbReference type="SUPFAM" id="SSF101322">
    <property type="entry name" value="YcfC-like"/>
    <property type="match status" value="1"/>
</dbReference>
<reference key="1">
    <citation type="submission" date="2006-09" db="EMBL/GenBank/DDBJ databases">
        <title>Complete sequence of chromosome 1 of Shewanella sp. ANA-3.</title>
        <authorList>
            <person name="Copeland A."/>
            <person name="Lucas S."/>
            <person name="Lapidus A."/>
            <person name="Barry K."/>
            <person name="Detter J.C."/>
            <person name="Glavina del Rio T."/>
            <person name="Hammon N."/>
            <person name="Israni S."/>
            <person name="Dalin E."/>
            <person name="Tice H."/>
            <person name="Pitluck S."/>
            <person name="Chertkov O."/>
            <person name="Brettin T."/>
            <person name="Bruce D."/>
            <person name="Han C."/>
            <person name="Tapia R."/>
            <person name="Gilna P."/>
            <person name="Schmutz J."/>
            <person name="Larimer F."/>
            <person name="Land M."/>
            <person name="Hauser L."/>
            <person name="Kyrpides N."/>
            <person name="Kim E."/>
            <person name="Newman D."/>
            <person name="Salticov C."/>
            <person name="Konstantinidis K."/>
            <person name="Klappenback J."/>
            <person name="Tiedje J."/>
            <person name="Richardson P."/>
        </authorList>
    </citation>
    <scope>NUCLEOTIDE SEQUENCE [LARGE SCALE GENOMIC DNA]</scope>
    <source>
        <strain>ANA-3</strain>
    </source>
</reference>
<accession>A0KW10</accession>
<gene>
    <name evidence="1" type="primary">hflD</name>
    <name type="ordered locus">Shewana3_1746</name>
</gene>
<name>HFLD_SHESA</name>
<protein>
    <recommendedName>
        <fullName evidence="1">High frequency lysogenization protein HflD homolog</fullName>
    </recommendedName>
</protein>
<feature type="chain" id="PRO_1000045442" description="High frequency lysogenization protein HflD homolog">
    <location>
        <begin position="1"/>
        <end position="205"/>
    </location>
</feature>
<keyword id="KW-0997">Cell inner membrane</keyword>
<keyword id="KW-1003">Cell membrane</keyword>
<keyword id="KW-0963">Cytoplasm</keyword>
<keyword id="KW-0472">Membrane</keyword>
<comment type="subcellular location">
    <subcellularLocation>
        <location>Cytoplasm</location>
    </subcellularLocation>
    <subcellularLocation>
        <location evidence="1">Cell inner membrane</location>
        <topology evidence="1">Peripheral membrane protein</topology>
        <orientation evidence="1">Cytoplasmic side</orientation>
    </subcellularLocation>
</comment>
<comment type="similarity">
    <text evidence="1">Belongs to the HflD family.</text>
</comment>
<evidence type="ECO:0000255" key="1">
    <source>
        <dbReference type="HAMAP-Rule" id="MF_00695"/>
    </source>
</evidence>
<proteinExistence type="inferred from homology"/>
<sequence length="205" mass="22741">MNEQLHNRTMAFAGILQAIAQVQHLARHGESDTDELAASLNTILVTDPESAADVYQDKAALHKGYQLVLNQLGDSSQKDVEITRYLVGILALERKLTRSNSGLAMLAERINQVNRQLHHFAITDEQVIANLASIYSDIISNLGPKIQISGNPLCLQRPLVQHKIRALLLAAMRSAVLWRQLGGKRRHLVFARKAIIDTAKKSLTL</sequence>
<organism>
    <name type="scientific">Shewanella sp. (strain ANA-3)</name>
    <dbReference type="NCBI Taxonomy" id="94122"/>
    <lineage>
        <taxon>Bacteria</taxon>
        <taxon>Pseudomonadati</taxon>
        <taxon>Pseudomonadota</taxon>
        <taxon>Gammaproteobacteria</taxon>
        <taxon>Alteromonadales</taxon>
        <taxon>Shewanellaceae</taxon>
        <taxon>Shewanella</taxon>
    </lineage>
</organism>